<reference key="1">
    <citation type="journal article" date="2013" name="Stand. Genomic Sci.">
        <title>Complete genome sequence of Arthrobacter sp. strain FB24.</title>
        <authorList>
            <person name="Nakatsu C.H."/>
            <person name="Barabote R."/>
            <person name="Thompson S."/>
            <person name="Bruce D."/>
            <person name="Detter C."/>
            <person name="Brettin T."/>
            <person name="Han C."/>
            <person name="Beasley F."/>
            <person name="Chen W."/>
            <person name="Konopka A."/>
            <person name="Xie G."/>
        </authorList>
    </citation>
    <scope>NUCLEOTIDE SEQUENCE [LARGE SCALE GENOMIC DNA]</scope>
    <source>
        <strain>FB24</strain>
    </source>
</reference>
<evidence type="ECO:0000255" key="1">
    <source>
        <dbReference type="HAMAP-Rule" id="MF_00225"/>
    </source>
</evidence>
<dbReference type="EC" id="1.3.5.2" evidence="1"/>
<dbReference type="EMBL" id="CP000454">
    <property type="protein sequence ID" value="ABK03601.1"/>
    <property type="molecule type" value="Genomic_DNA"/>
</dbReference>
<dbReference type="RefSeq" id="WP_011692065.1">
    <property type="nucleotide sequence ID" value="NC_008541.1"/>
</dbReference>
<dbReference type="SMR" id="A0JX31"/>
<dbReference type="STRING" id="290399.Arth_2221"/>
<dbReference type="KEGG" id="art:Arth_2221"/>
<dbReference type="eggNOG" id="COG0167">
    <property type="taxonomic scope" value="Bacteria"/>
</dbReference>
<dbReference type="HOGENOM" id="CLU_013640_2_0_11"/>
<dbReference type="OrthoDB" id="9802377at2"/>
<dbReference type="UniPathway" id="UPA00070">
    <property type="reaction ID" value="UER00946"/>
</dbReference>
<dbReference type="Proteomes" id="UP000000754">
    <property type="component" value="Chromosome"/>
</dbReference>
<dbReference type="GO" id="GO:0005737">
    <property type="term" value="C:cytoplasm"/>
    <property type="evidence" value="ECO:0007669"/>
    <property type="project" value="InterPro"/>
</dbReference>
<dbReference type="GO" id="GO:0005886">
    <property type="term" value="C:plasma membrane"/>
    <property type="evidence" value="ECO:0007669"/>
    <property type="project" value="UniProtKB-SubCell"/>
</dbReference>
<dbReference type="GO" id="GO:0106430">
    <property type="term" value="F:dihydroorotate dehydrogenase (quinone) activity"/>
    <property type="evidence" value="ECO:0007669"/>
    <property type="project" value="UniProtKB-EC"/>
</dbReference>
<dbReference type="GO" id="GO:0006207">
    <property type="term" value="P:'de novo' pyrimidine nucleobase biosynthetic process"/>
    <property type="evidence" value="ECO:0007669"/>
    <property type="project" value="InterPro"/>
</dbReference>
<dbReference type="GO" id="GO:0044205">
    <property type="term" value="P:'de novo' UMP biosynthetic process"/>
    <property type="evidence" value="ECO:0007669"/>
    <property type="project" value="UniProtKB-UniRule"/>
</dbReference>
<dbReference type="CDD" id="cd04738">
    <property type="entry name" value="DHOD_2_like"/>
    <property type="match status" value="1"/>
</dbReference>
<dbReference type="FunFam" id="3.20.20.70:FF:000123">
    <property type="entry name" value="Dihydroorotate dehydrogenase (quinone)"/>
    <property type="match status" value="1"/>
</dbReference>
<dbReference type="Gene3D" id="3.20.20.70">
    <property type="entry name" value="Aldolase class I"/>
    <property type="match status" value="1"/>
</dbReference>
<dbReference type="HAMAP" id="MF_00225">
    <property type="entry name" value="DHO_dh_type2"/>
    <property type="match status" value="1"/>
</dbReference>
<dbReference type="InterPro" id="IPR013785">
    <property type="entry name" value="Aldolase_TIM"/>
</dbReference>
<dbReference type="InterPro" id="IPR050074">
    <property type="entry name" value="DHO_dehydrogenase"/>
</dbReference>
<dbReference type="InterPro" id="IPR005719">
    <property type="entry name" value="Dihydroorotate_DH_2"/>
</dbReference>
<dbReference type="InterPro" id="IPR005720">
    <property type="entry name" value="Dihydroorotate_DH_cat"/>
</dbReference>
<dbReference type="InterPro" id="IPR001295">
    <property type="entry name" value="Dihydroorotate_DH_CS"/>
</dbReference>
<dbReference type="NCBIfam" id="NF003648">
    <property type="entry name" value="PRK05286.2-1"/>
    <property type="match status" value="1"/>
</dbReference>
<dbReference type="NCBIfam" id="NF003652">
    <property type="entry name" value="PRK05286.2-5"/>
    <property type="match status" value="1"/>
</dbReference>
<dbReference type="NCBIfam" id="TIGR01036">
    <property type="entry name" value="pyrD_sub2"/>
    <property type="match status" value="1"/>
</dbReference>
<dbReference type="PANTHER" id="PTHR48109:SF4">
    <property type="entry name" value="DIHYDROOROTATE DEHYDROGENASE (QUINONE), MITOCHONDRIAL"/>
    <property type="match status" value="1"/>
</dbReference>
<dbReference type="PANTHER" id="PTHR48109">
    <property type="entry name" value="DIHYDROOROTATE DEHYDROGENASE (QUINONE), MITOCHONDRIAL-RELATED"/>
    <property type="match status" value="1"/>
</dbReference>
<dbReference type="Pfam" id="PF01180">
    <property type="entry name" value="DHO_dh"/>
    <property type="match status" value="1"/>
</dbReference>
<dbReference type="SUPFAM" id="SSF51395">
    <property type="entry name" value="FMN-linked oxidoreductases"/>
    <property type="match status" value="1"/>
</dbReference>
<dbReference type="PROSITE" id="PS00911">
    <property type="entry name" value="DHODEHASE_1"/>
    <property type="match status" value="1"/>
</dbReference>
<dbReference type="PROSITE" id="PS00912">
    <property type="entry name" value="DHODEHASE_2"/>
    <property type="match status" value="1"/>
</dbReference>
<accession>A0JX31</accession>
<feature type="chain" id="PRO_0000336453" description="Dihydroorotate dehydrogenase (quinone)">
    <location>
        <begin position="1"/>
        <end position="357"/>
    </location>
</feature>
<feature type="active site" description="Nucleophile" evidence="1">
    <location>
        <position position="189"/>
    </location>
</feature>
<feature type="binding site" evidence="1">
    <location>
        <begin position="67"/>
        <end position="71"/>
    </location>
    <ligand>
        <name>FMN</name>
        <dbReference type="ChEBI" id="CHEBI:58210"/>
    </ligand>
</feature>
<feature type="binding site" evidence="1">
    <location>
        <position position="71"/>
    </location>
    <ligand>
        <name>substrate</name>
    </ligand>
</feature>
<feature type="binding site" evidence="1">
    <location>
        <position position="91"/>
    </location>
    <ligand>
        <name>FMN</name>
        <dbReference type="ChEBI" id="CHEBI:58210"/>
    </ligand>
</feature>
<feature type="binding site" evidence="1">
    <location>
        <begin position="116"/>
        <end position="120"/>
    </location>
    <ligand>
        <name>substrate</name>
    </ligand>
</feature>
<feature type="binding site" evidence="1">
    <location>
        <position position="153"/>
    </location>
    <ligand>
        <name>FMN</name>
        <dbReference type="ChEBI" id="CHEBI:58210"/>
    </ligand>
</feature>
<feature type="binding site" evidence="1">
    <location>
        <position position="186"/>
    </location>
    <ligand>
        <name>FMN</name>
        <dbReference type="ChEBI" id="CHEBI:58210"/>
    </ligand>
</feature>
<feature type="binding site" evidence="1">
    <location>
        <position position="186"/>
    </location>
    <ligand>
        <name>substrate</name>
    </ligand>
</feature>
<feature type="binding site" evidence="1">
    <location>
        <position position="191"/>
    </location>
    <ligand>
        <name>substrate</name>
    </ligand>
</feature>
<feature type="binding site" evidence="1">
    <location>
        <position position="228"/>
    </location>
    <ligand>
        <name>FMN</name>
        <dbReference type="ChEBI" id="CHEBI:58210"/>
    </ligand>
</feature>
<feature type="binding site" evidence="1">
    <location>
        <position position="256"/>
    </location>
    <ligand>
        <name>FMN</name>
        <dbReference type="ChEBI" id="CHEBI:58210"/>
    </ligand>
</feature>
<feature type="binding site" evidence="1">
    <location>
        <begin position="257"/>
        <end position="258"/>
    </location>
    <ligand>
        <name>substrate</name>
    </ligand>
</feature>
<feature type="binding site" evidence="1">
    <location>
        <position position="282"/>
    </location>
    <ligand>
        <name>FMN</name>
        <dbReference type="ChEBI" id="CHEBI:58210"/>
    </ligand>
</feature>
<feature type="binding site" evidence="1">
    <location>
        <position position="311"/>
    </location>
    <ligand>
        <name>FMN</name>
        <dbReference type="ChEBI" id="CHEBI:58210"/>
    </ligand>
</feature>
<feature type="binding site" evidence="1">
    <location>
        <begin position="332"/>
        <end position="333"/>
    </location>
    <ligand>
        <name>FMN</name>
        <dbReference type="ChEBI" id="CHEBI:58210"/>
    </ligand>
</feature>
<comment type="function">
    <text evidence="1">Catalyzes the conversion of dihydroorotate to orotate with quinone as electron acceptor.</text>
</comment>
<comment type="catalytic activity">
    <reaction evidence="1">
        <text>(S)-dihydroorotate + a quinone = orotate + a quinol</text>
        <dbReference type="Rhea" id="RHEA:30187"/>
        <dbReference type="ChEBI" id="CHEBI:24646"/>
        <dbReference type="ChEBI" id="CHEBI:30839"/>
        <dbReference type="ChEBI" id="CHEBI:30864"/>
        <dbReference type="ChEBI" id="CHEBI:132124"/>
        <dbReference type="EC" id="1.3.5.2"/>
    </reaction>
</comment>
<comment type="cofactor">
    <cofactor evidence="1">
        <name>FMN</name>
        <dbReference type="ChEBI" id="CHEBI:58210"/>
    </cofactor>
    <text evidence="1">Binds 1 FMN per subunit.</text>
</comment>
<comment type="pathway">
    <text evidence="1">Pyrimidine metabolism; UMP biosynthesis via de novo pathway; orotate from (S)-dihydroorotate (quinone route): step 1/1.</text>
</comment>
<comment type="subunit">
    <text evidence="1">Monomer.</text>
</comment>
<comment type="subcellular location">
    <subcellularLocation>
        <location evidence="1">Cell membrane</location>
        <topology evidence="1">Peripheral membrane protein</topology>
    </subcellularLocation>
</comment>
<comment type="similarity">
    <text evidence="1">Belongs to the dihydroorotate dehydrogenase family. Type 2 subfamily.</text>
</comment>
<name>PYRD_ARTS2</name>
<protein>
    <recommendedName>
        <fullName evidence="1">Dihydroorotate dehydrogenase (quinone)</fullName>
        <ecNumber evidence="1">1.3.5.2</ecNumber>
    </recommendedName>
    <alternativeName>
        <fullName evidence="1">DHOdehase</fullName>
        <shortName evidence="1">DHOD</shortName>
        <shortName evidence="1">DHODase</shortName>
    </alternativeName>
    <alternativeName>
        <fullName evidence="1">Dihydroorotate oxidase</fullName>
    </alternativeName>
</protein>
<proteinExistence type="inferred from homology"/>
<keyword id="KW-1003">Cell membrane</keyword>
<keyword id="KW-0285">Flavoprotein</keyword>
<keyword id="KW-0288">FMN</keyword>
<keyword id="KW-0472">Membrane</keyword>
<keyword id="KW-0560">Oxidoreductase</keyword>
<keyword id="KW-0665">Pyrimidine biosynthesis</keyword>
<keyword id="KW-1185">Reference proteome</keyword>
<sequence>MRVYPTFFRLAFSWMDAERAHRIGFRAIRLAHSSGAGRVLAKFTAPAPSLQTTAFGITFPSPFGLAAGFDKEGHGIEALTELGFGHVEVGTITGQAQPGNEKPRLFRLVEDKAVINRMGFNNDGATAVAPRLKSARAALQRRHPGVRPVIGVNIGKSKVVELEDAASDYLVSARSLAPAADYLVVNVSSPNTPGLRLLQNVETLRPLLKAVGEEADKAAGRHVPLLVKIAPDLTDEDIDDVAKLALDLGLDGIIATNTTIGREGLTSDPEKIRDCGPGGLSGAPLKARSLEVLRRLKEATGGSLTLVSVGGVENARDVQERLDAGATLVQGYTAFLYEGPFWAARINRQLAKHPARR</sequence>
<gene>
    <name evidence="1" type="primary">pyrD</name>
    <name type="ordered locus">Arth_2221</name>
</gene>
<organism>
    <name type="scientific">Arthrobacter sp. (strain FB24)</name>
    <dbReference type="NCBI Taxonomy" id="290399"/>
    <lineage>
        <taxon>Bacteria</taxon>
        <taxon>Bacillati</taxon>
        <taxon>Actinomycetota</taxon>
        <taxon>Actinomycetes</taxon>
        <taxon>Micrococcales</taxon>
        <taxon>Micrococcaceae</taxon>
        <taxon>Arthrobacter</taxon>
    </lineage>
</organism>